<comment type="catalytic activity">
    <reaction evidence="1">
        <text>tRNA(Arg) + L-arginine + ATP = L-arginyl-tRNA(Arg) + AMP + diphosphate</text>
        <dbReference type="Rhea" id="RHEA:20301"/>
        <dbReference type="Rhea" id="RHEA-COMP:9658"/>
        <dbReference type="Rhea" id="RHEA-COMP:9673"/>
        <dbReference type="ChEBI" id="CHEBI:30616"/>
        <dbReference type="ChEBI" id="CHEBI:32682"/>
        <dbReference type="ChEBI" id="CHEBI:33019"/>
        <dbReference type="ChEBI" id="CHEBI:78442"/>
        <dbReference type="ChEBI" id="CHEBI:78513"/>
        <dbReference type="ChEBI" id="CHEBI:456215"/>
        <dbReference type="EC" id="6.1.1.19"/>
    </reaction>
</comment>
<comment type="subunit">
    <text evidence="1">Monomer.</text>
</comment>
<comment type="subcellular location">
    <subcellularLocation>
        <location evidence="1">Cytoplasm</location>
    </subcellularLocation>
</comment>
<comment type="similarity">
    <text evidence="1">Belongs to the class-I aminoacyl-tRNA synthetase family.</text>
</comment>
<reference key="1">
    <citation type="submission" date="2007-02" db="EMBL/GenBank/DDBJ databases">
        <title>Complete sequence of chromosome 1 of Rhodobacter sphaeroides ATCC 17029.</title>
        <authorList>
            <person name="Copeland A."/>
            <person name="Lucas S."/>
            <person name="Lapidus A."/>
            <person name="Barry K."/>
            <person name="Detter J.C."/>
            <person name="Glavina del Rio T."/>
            <person name="Hammon N."/>
            <person name="Israni S."/>
            <person name="Dalin E."/>
            <person name="Tice H."/>
            <person name="Pitluck S."/>
            <person name="Kiss H."/>
            <person name="Brettin T."/>
            <person name="Bruce D."/>
            <person name="Han C."/>
            <person name="Tapia R."/>
            <person name="Gilna P."/>
            <person name="Schmutz J."/>
            <person name="Larimer F."/>
            <person name="Land M."/>
            <person name="Hauser L."/>
            <person name="Kyrpides N."/>
            <person name="Mikhailova N."/>
            <person name="Richardson P."/>
            <person name="Mackenzie C."/>
            <person name="Choudhary M."/>
            <person name="Donohue T.J."/>
            <person name="Kaplan S."/>
        </authorList>
    </citation>
    <scope>NUCLEOTIDE SEQUENCE [LARGE SCALE GENOMIC DNA]</scope>
    <source>
        <strain>ATCC 17029 / ATH 2.4.9</strain>
    </source>
</reference>
<accession>A3PK32</accession>
<evidence type="ECO:0000255" key="1">
    <source>
        <dbReference type="HAMAP-Rule" id="MF_00123"/>
    </source>
</evidence>
<protein>
    <recommendedName>
        <fullName evidence="1">Arginine--tRNA ligase</fullName>
        <ecNumber evidence="1">6.1.1.19</ecNumber>
    </recommendedName>
    <alternativeName>
        <fullName evidence="1">Arginyl-tRNA synthetase</fullName>
        <shortName evidence="1">ArgRS</shortName>
    </alternativeName>
</protein>
<gene>
    <name evidence="1" type="primary">argS</name>
    <name type="ordered locus">Rsph17029_1588</name>
</gene>
<name>SYR_CERS1</name>
<organism>
    <name type="scientific">Cereibacter sphaeroides (strain ATCC 17029 / ATH 2.4.9)</name>
    <name type="common">Rhodobacter sphaeroides</name>
    <dbReference type="NCBI Taxonomy" id="349101"/>
    <lineage>
        <taxon>Bacteria</taxon>
        <taxon>Pseudomonadati</taxon>
        <taxon>Pseudomonadota</taxon>
        <taxon>Alphaproteobacteria</taxon>
        <taxon>Rhodobacterales</taxon>
        <taxon>Paracoccaceae</taxon>
        <taxon>Cereibacter</taxon>
    </lineage>
</organism>
<sequence>MNLFTEIRTLVTAELGAMTEAGDLPAGLDLSAVAVEPPRDPAHGDMSTNAAMVLAKPSGKPPRAIAEALATRLAADPRISSAEVAGPGFLNLRLRPAVWQGMVATILQAGDTYGRSTIGAGQKVNVEFVSANPTGPMHVGHVRGAVVGDALARLLAYAGWNVTREYYINDGGAQVDVLARSAFERYREAHGLEPEIREGLYPGDYLIPVGEALKAKYGDSLLDKGEQHWLKEVREFATEMMMQMIREDLAALGVEMDVYSSEKALYGTGKIEAALDRLKEMDLIYEGVLEPPKGKTPEDWEPREQTLFRSTAHGDDVDRPVKKSDGSWTYFAPDIAYHYDKVTRGFDQLIDIFGADHGGYVKRMKAAVAALSAGRVPLDIKLIQLVKLWKNGEPFKMSKRAGTYVTLRDVVEQVGTDVTRFVMLTRKNDATLDFDFDKVLEQSKENPVFYVQYANARINSVLRKAREQGMDVSDATLATADLDRLDHPAEIALIAKLAEWPRLVEIAARTNEPHRVAFYLHELASELHGLWNRGNDEAGLRFLQDDPVVSQAKIALARAVGVVICAGLGILGVTPVEEMR</sequence>
<keyword id="KW-0030">Aminoacyl-tRNA synthetase</keyword>
<keyword id="KW-0067">ATP-binding</keyword>
<keyword id="KW-0963">Cytoplasm</keyword>
<keyword id="KW-0436">Ligase</keyword>
<keyword id="KW-0547">Nucleotide-binding</keyword>
<keyword id="KW-0648">Protein biosynthesis</keyword>
<proteinExistence type="inferred from homology"/>
<dbReference type="EC" id="6.1.1.19" evidence="1"/>
<dbReference type="EMBL" id="CP000577">
    <property type="protein sequence ID" value="ABN76698.1"/>
    <property type="molecule type" value="Genomic_DNA"/>
</dbReference>
<dbReference type="RefSeq" id="WP_011841117.1">
    <property type="nucleotide sequence ID" value="NC_009049.1"/>
</dbReference>
<dbReference type="SMR" id="A3PK32"/>
<dbReference type="KEGG" id="rsh:Rsph17029_1588"/>
<dbReference type="HOGENOM" id="CLU_006406_0_1_5"/>
<dbReference type="GO" id="GO:0005737">
    <property type="term" value="C:cytoplasm"/>
    <property type="evidence" value="ECO:0007669"/>
    <property type="project" value="UniProtKB-SubCell"/>
</dbReference>
<dbReference type="GO" id="GO:0004814">
    <property type="term" value="F:arginine-tRNA ligase activity"/>
    <property type="evidence" value="ECO:0007669"/>
    <property type="project" value="UniProtKB-UniRule"/>
</dbReference>
<dbReference type="GO" id="GO:0005524">
    <property type="term" value="F:ATP binding"/>
    <property type="evidence" value="ECO:0007669"/>
    <property type="project" value="UniProtKB-UniRule"/>
</dbReference>
<dbReference type="GO" id="GO:0006420">
    <property type="term" value="P:arginyl-tRNA aminoacylation"/>
    <property type="evidence" value="ECO:0007669"/>
    <property type="project" value="UniProtKB-UniRule"/>
</dbReference>
<dbReference type="CDD" id="cd00671">
    <property type="entry name" value="ArgRS_core"/>
    <property type="match status" value="1"/>
</dbReference>
<dbReference type="FunFam" id="3.40.50.620:FF:000062">
    <property type="entry name" value="Arginine--tRNA ligase"/>
    <property type="match status" value="1"/>
</dbReference>
<dbReference type="Gene3D" id="3.30.1360.70">
    <property type="entry name" value="Arginyl tRNA synthetase N-terminal domain"/>
    <property type="match status" value="1"/>
</dbReference>
<dbReference type="Gene3D" id="3.40.50.620">
    <property type="entry name" value="HUPs"/>
    <property type="match status" value="1"/>
</dbReference>
<dbReference type="Gene3D" id="1.10.730.10">
    <property type="entry name" value="Isoleucyl-tRNA Synthetase, Domain 1"/>
    <property type="match status" value="1"/>
</dbReference>
<dbReference type="HAMAP" id="MF_00123">
    <property type="entry name" value="Arg_tRNA_synth"/>
    <property type="match status" value="1"/>
</dbReference>
<dbReference type="InterPro" id="IPR001412">
    <property type="entry name" value="aa-tRNA-synth_I_CS"/>
</dbReference>
<dbReference type="InterPro" id="IPR001278">
    <property type="entry name" value="Arg-tRNA-ligase"/>
</dbReference>
<dbReference type="InterPro" id="IPR005148">
    <property type="entry name" value="Arg-tRNA-synth_N"/>
</dbReference>
<dbReference type="InterPro" id="IPR036695">
    <property type="entry name" value="Arg-tRNA-synth_N_sf"/>
</dbReference>
<dbReference type="InterPro" id="IPR035684">
    <property type="entry name" value="ArgRS_core"/>
</dbReference>
<dbReference type="InterPro" id="IPR008909">
    <property type="entry name" value="DALR_anticod-bd"/>
</dbReference>
<dbReference type="InterPro" id="IPR014729">
    <property type="entry name" value="Rossmann-like_a/b/a_fold"/>
</dbReference>
<dbReference type="InterPro" id="IPR009080">
    <property type="entry name" value="tRNAsynth_Ia_anticodon-bd"/>
</dbReference>
<dbReference type="NCBIfam" id="TIGR00456">
    <property type="entry name" value="argS"/>
    <property type="match status" value="1"/>
</dbReference>
<dbReference type="PANTHER" id="PTHR11956:SF5">
    <property type="entry name" value="ARGININE--TRNA LIGASE, CYTOPLASMIC"/>
    <property type="match status" value="1"/>
</dbReference>
<dbReference type="PANTHER" id="PTHR11956">
    <property type="entry name" value="ARGINYL-TRNA SYNTHETASE"/>
    <property type="match status" value="1"/>
</dbReference>
<dbReference type="Pfam" id="PF03485">
    <property type="entry name" value="Arg_tRNA_synt_N"/>
    <property type="match status" value="1"/>
</dbReference>
<dbReference type="Pfam" id="PF05746">
    <property type="entry name" value="DALR_1"/>
    <property type="match status" value="1"/>
</dbReference>
<dbReference type="Pfam" id="PF00750">
    <property type="entry name" value="tRNA-synt_1d"/>
    <property type="match status" value="1"/>
</dbReference>
<dbReference type="PRINTS" id="PR01038">
    <property type="entry name" value="TRNASYNTHARG"/>
</dbReference>
<dbReference type="SMART" id="SM01016">
    <property type="entry name" value="Arg_tRNA_synt_N"/>
    <property type="match status" value="1"/>
</dbReference>
<dbReference type="SMART" id="SM00836">
    <property type="entry name" value="DALR_1"/>
    <property type="match status" value="1"/>
</dbReference>
<dbReference type="SUPFAM" id="SSF47323">
    <property type="entry name" value="Anticodon-binding domain of a subclass of class I aminoacyl-tRNA synthetases"/>
    <property type="match status" value="1"/>
</dbReference>
<dbReference type="SUPFAM" id="SSF55190">
    <property type="entry name" value="Arginyl-tRNA synthetase (ArgRS), N-terminal 'additional' domain"/>
    <property type="match status" value="1"/>
</dbReference>
<dbReference type="SUPFAM" id="SSF52374">
    <property type="entry name" value="Nucleotidylyl transferase"/>
    <property type="match status" value="1"/>
</dbReference>
<dbReference type="PROSITE" id="PS00178">
    <property type="entry name" value="AA_TRNA_LIGASE_I"/>
    <property type="match status" value="1"/>
</dbReference>
<feature type="chain" id="PRO_1000018101" description="Arginine--tRNA ligase">
    <location>
        <begin position="1"/>
        <end position="580"/>
    </location>
</feature>
<feature type="short sequence motif" description="'HIGH' region">
    <location>
        <begin position="131"/>
        <end position="141"/>
    </location>
</feature>